<feature type="chain" id="PRO_0000283385" description="F-box protein At2g20380">
    <location>
        <begin position="1"/>
        <end position="348"/>
    </location>
</feature>
<feature type="domain" description="F-box" evidence="1">
    <location>
        <begin position="14"/>
        <end position="60"/>
    </location>
</feature>
<sequence>MSSSPEKKRRKKLSPESNSLPNDLIVTILARLSQSYYPKLSLVSKTFRAILASPELYQTRILLSRTETFLYVCLSFPGEPNPGWFTLYRKPNQTLTTKKKKNSVHLLAPILNSPPVEFPSLIAVGSYLYAFRAAIEEGTSDSLNCVEVYNTDTQTWIPVPPNKRIFKLQHMKGMLYMKVSKLLSFVAQDAEELAPLFPKLRSLLSTEVVAFKPKVSEGYEVLGFSVNTDLGRGSFCMIEEITYHYDPSVKFRWRRRQGGVWRSLVGLEGLPKFARYSSVKLADCGGKLVVLWHKYVPASGYEEKMVWCAEISLEKRSKKEIWGKIEWFDAVLRVPKYYQFVGAKSATV</sequence>
<dbReference type="EMBL" id="AC006569">
    <property type="protein sequence ID" value="AAD21750.1"/>
    <property type="molecule type" value="Genomic_DNA"/>
</dbReference>
<dbReference type="EMBL" id="CP002685">
    <property type="protein sequence ID" value="AEC07000.1"/>
    <property type="molecule type" value="Genomic_DNA"/>
</dbReference>
<dbReference type="PIR" id="E84588">
    <property type="entry name" value="E84588"/>
</dbReference>
<dbReference type="RefSeq" id="NP_179628.1">
    <property type="nucleotide sequence ID" value="NM_127597.1"/>
</dbReference>
<dbReference type="BioGRID" id="1910">
    <property type="interactions" value="1"/>
</dbReference>
<dbReference type="STRING" id="3702.Q9SK64"/>
<dbReference type="PaxDb" id="3702-AT2G20380.1"/>
<dbReference type="EnsemblPlants" id="AT2G20380.1">
    <property type="protein sequence ID" value="AT2G20380.1"/>
    <property type="gene ID" value="AT2G20380"/>
</dbReference>
<dbReference type="GeneID" id="816557"/>
<dbReference type="Gramene" id="AT2G20380.1">
    <property type="protein sequence ID" value="AT2G20380.1"/>
    <property type="gene ID" value="AT2G20380"/>
</dbReference>
<dbReference type="KEGG" id="ath:AT2G20380"/>
<dbReference type="Araport" id="AT2G20380"/>
<dbReference type="TAIR" id="AT2G20380"/>
<dbReference type="eggNOG" id="KOG1072">
    <property type="taxonomic scope" value="Eukaryota"/>
</dbReference>
<dbReference type="HOGENOM" id="CLU_032521_1_2_1"/>
<dbReference type="InParanoid" id="Q9SK64"/>
<dbReference type="OMA" id="SGYEEKM"/>
<dbReference type="PhylomeDB" id="Q9SK64"/>
<dbReference type="PRO" id="PR:Q9SK64"/>
<dbReference type="Proteomes" id="UP000006548">
    <property type="component" value="Chromosome 2"/>
</dbReference>
<dbReference type="ExpressionAtlas" id="Q9SK64">
    <property type="expression patterns" value="baseline and differential"/>
</dbReference>
<dbReference type="CDD" id="cd22152">
    <property type="entry name" value="F-box_AtAFR-like"/>
    <property type="match status" value="1"/>
</dbReference>
<dbReference type="InterPro" id="IPR036047">
    <property type="entry name" value="F-box-like_dom_sf"/>
</dbReference>
<dbReference type="InterPro" id="IPR050354">
    <property type="entry name" value="F-box/kelch-repeat_ARATH"/>
</dbReference>
<dbReference type="InterPro" id="IPR001810">
    <property type="entry name" value="F-box_dom"/>
</dbReference>
<dbReference type="InterPro" id="IPR015915">
    <property type="entry name" value="Kelch-typ_b-propeller"/>
</dbReference>
<dbReference type="InterPro" id="IPR006652">
    <property type="entry name" value="Kelch_1"/>
</dbReference>
<dbReference type="PANTHER" id="PTHR24414">
    <property type="entry name" value="F-BOX/KELCH-REPEAT PROTEIN SKIP4"/>
    <property type="match status" value="1"/>
</dbReference>
<dbReference type="PANTHER" id="PTHR24414:SF184">
    <property type="entry name" value="GALACTOSE OXIDASE_KELCH REPEAT SUPERFAMILY PROTEIN"/>
    <property type="match status" value="1"/>
</dbReference>
<dbReference type="Pfam" id="PF00646">
    <property type="entry name" value="F-box"/>
    <property type="match status" value="1"/>
</dbReference>
<dbReference type="Pfam" id="PF01344">
    <property type="entry name" value="Kelch_1"/>
    <property type="match status" value="1"/>
</dbReference>
<dbReference type="Pfam" id="PF25210">
    <property type="entry name" value="Kelch_FKB95"/>
    <property type="match status" value="1"/>
</dbReference>
<dbReference type="SMART" id="SM00256">
    <property type="entry name" value="FBOX"/>
    <property type="match status" value="1"/>
</dbReference>
<dbReference type="SUPFAM" id="SSF81383">
    <property type="entry name" value="F-box domain"/>
    <property type="match status" value="1"/>
</dbReference>
<dbReference type="SUPFAM" id="SSF117281">
    <property type="entry name" value="Kelch motif"/>
    <property type="match status" value="1"/>
</dbReference>
<dbReference type="PROSITE" id="PS50181">
    <property type="entry name" value="FBOX"/>
    <property type="match status" value="1"/>
</dbReference>
<name>FB114_ARATH</name>
<keyword id="KW-1185">Reference proteome</keyword>
<gene>
    <name type="ordered locus">At2g20380</name>
    <name type="ORF">F11A3.7</name>
</gene>
<proteinExistence type="predicted"/>
<protein>
    <recommendedName>
        <fullName>F-box protein At2g20380</fullName>
    </recommendedName>
</protein>
<reference key="1">
    <citation type="journal article" date="1999" name="Nature">
        <title>Sequence and analysis of chromosome 2 of the plant Arabidopsis thaliana.</title>
        <authorList>
            <person name="Lin X."/>
            <person name="Kaul S."/>
            <person name="Rounsley S.D."/>
            <person name="Shea T.P."/>
            <person name="Benito M.-I."/>
            <person name="Town C.D."/>
            <person name="Fujii C.Y."/>
            <person name="Mason T.M."/>
            <person name="Bowman C.L."/>
            <person name="Barnstead M.E."/>
            <person name="Feldblyum T.V."/>
            <person name="Buell C.R."/>
            <person name="Ketchum K.A."/>
            <person name="Lee J.J."/>
            <person name="Ronning C.M."/>
            <person name="Koo H.L."/>
            <person name="Moffat K.S."/>
            <person name="Cronin L.A."/>
            <person name="Shen M."/>
            <person name="Pai G."/>
            <person name="Van Aken S."/>
            <person name="Umayam L."/>
            <person name="Tallon L.J."/>
            <person name="Gill J.E."/>
            <person name="Adams M.D."/>
            <person name="Carrera A.J."/>
            <person name="Creasy T.H."/>
            <person name="Goodman H.M."/>
            <person name="Somerville C.R."/>
            <person name="Copenhaver G.P."/>
            <person name="Preuss D."/>
            <person name="Nierman W.C."/>
            <person name="White O."/>
            <person name="Eisen J.A."/>
            <person name="Salzberg S.L."/>
            <person name="Fraser C.M."/>
            <person name="Venter J.C."/>
        </authorList>
    </citation>
    <scope>NUCLEOTIDE SEQUENCE [LARGE SCALE GENOMIC DNA]</scope>
    <source>
        <strain>cv. Columbia</strain>
    </source>
</reference>
<reference key="2">
    <citation type="journal article" date="2017" name="Plant J.">
        <title>Araport11: a complete reannotation of the Arabidopsis thaliana reference genome.</title>
        <authorList>
            <person name="Cheng C.Y."/>
            <person name="Krishnakumar V."/>
            <person name="Chan A.P."/>
            <person name="Thibaud-Nissen F."/>
            <person name="Schobel S."/>
            <person name="Town C.D."/>
        </authorList>
    </citation>
    <scope>GENOME REANNOTATION</scope>
    <source>
        <strain>cv. Columbia</strain>
    </source>
</reference>
<accession>Q9SK64</accession>
<organism>
    <name type="scientific">Arabidopsis thaliana</name>
    <name type="common">Mouse-ear cress</name>
    <dbReference type="NCBI Taxonomy" id="3702"/>
    <lineage>
        <taxon>Eukaryota</taxon>
        <taxon>Viridiplantae</taxon>
        <taxon>Streptophyta</taxon>
        <taxon>Embryophyta</taxon>
        <taxon>Tracheophyta</taxon>
        <taxon>Spermatophyta</taxon>
        <taxon>Magnoliopsida</taxon>
        <taxon>eudicotyledons</taxon>
        <taxon>Gunneridae</taxon>
        <taxon>Pentapetalae</taxon>
        <taxon>rosids</taxon>
        <taxon>malvids</taxon>
        <taxon>Brassicales</taxon>
        <taxon>Brassicaceae</taxon>
        <taxon>Camelineae</taxon>
        <taxon>Arabidopsis</taxon>
    </lineage>
</organism>
<evidence type="ECO:0000255" key="1">
    <source>
        <dbReference type="PROSITE-ProRule" id="PRU00080"/>
    </source>
</evidence>